<protein>
    <recommendedName>
        <fullName evidence="1">Undecaprenyl-diphosphatase</fullName>
        <ecNumber evidence="1">3.6.1.27</ecNumber>
    </recommendedName>
    <alternativeName>
        <fullName evidence="1">Undecaprenyl pyrophosphate phosphatase</fullName>
    </alternativeName>
</protein>
<organism>
    <name type="scientific">Methanococcus maripaludis (strain C6 / ATCC BAA-1332)</name>
    <dbReference type="NCBI Taxonomy" id="444158"/>
    <lineage>
        <taxon>Archaea</taxon>
        <taxon>Methanobacteriati</taxon>
        <taxon>Methanobacteriota</taxon>
        <taxon>Methanomada group</taxon>
        <taxon>Methanococci</taxon>
        <taxon>Methanococcales</taxon>
        <taxon>Methanococcaceae</taxon>
        <taxon>Methanococcus</taxon>
    </lineage>
</organism>
<keyword id="KW-1003">Cell membrane</keyword>
<keyword id="KW-0378">Hydrolase</keyword>
<keyword id="KW-0472">Membrane</keyword>
<keyword id="KW-0812">Transmembrane</keyword>
<keyword id="KW-1133">Transmembrane helix</keyword>
<dbReference type="EC" id="3.6.1.27" evidence="1"/>
<dbReference type="EMBL" id="CP000867">
    <property type="protein sequence ID" value="ABX02338.1"/>
    <property type="molecule type" value="Genomic_DNA"/>
</dbReference>
<dbReference type="SMR" id="A9AAG5"/>
<dbReference type="STRING" id="444158.MmarC6_1525"/>
<dbReference type="KEGG" id="mmx:MmarC6_1525"/>
<dbReference type="eggNOG" id="arCOG04761">
    <property type="taxonomic scope" value="Archaea"/>
</dbReference>
<dbReference type="HOGENOM" id="CLU_060296_1_2_2"/>
<dbReference type="OrthoDB" id="65864at2157"/>
<dbReference type="PhylomeDB" id="A9AAG5"/>
<dbReference type="GO" id="GO:0005886">
    <property type="term" value="C:plasma membrane"/>
    <property type="evidence" value="ECO:0007669"/>
    <property type="project" value="UniProtKB-SubCell"/>
</dbReference>
<dbReference type="GO" id="GO:0050380">
    <property type="term" value="F:undecaprenyl-diphosphatase activity"/>
    <property type="evidence" value="ECO:0007669"/>
    <property type="project" value="UniProtKB-UniRule"/>
</dbReference>
<dbReference type="HAMAP" id="MF_01006">
    <property type="entry name" value="Undec_diphosphatase"/>
    <property type="match status" value="1"/>
</dbReference>
<dbReference type="InterPro" id="IPR003824">
    <property type="entry name" value="UppP"/>
</dbReference>
<dbReference type="PANTHER" id="PTHR30622">
    <property type="entry name" value="UNDECAPRENYL-DIPHOSPHATASE"/>
    <property type="match status" value="1"/>
</dbReference>
<dbReference type="PANTHER" id="PTHR30622:SF4">
    <property type="entry name" value="UNDECAPRENYL-DIPHOSPHATASE"/>
    <property type="match status" value="1"/>
</dbReference>
<dbReference type="Pfam" id="PF02673">
    <property type="entry name" value="BacA"/>
    <property type="match status" value="1"/>
</dbReference>
<evidence type="ECO:0000255" key="1">
    <source>
        <dbReference type="HAMAP-Rule" id="MF_01006"/>
    </source>
</evidence>
<sequence length="249" mass="27221">MEELILGVVQGLTEFLPISSSGHLAIFTAIFNATPDVGYFAFLHLATFLAVLIFVKSEVFEIVNGISKKDKEYINLASKLVLSTIPAVIVGLCFGDFIESVFSSTFLIGVFLSITGILMLLSDKLNKNLKTIKSIPYLDALIVGIFQAFSVLPGISRSGTTLFAALFLGMKKEDAVKYSFLMSLPVTFGAGILELQKVAFSTEQIFGFFISFLTGLLGLYLVKKMVIGGKLKIFGYYCVLASFFVLMFL</sequence>
<proteinExistence type="inferred from homology"/>
<comment type="function">
    <text evidence="1">Catalyzes the dephosphorylation of undecaprenyl diphosphate (UPP).</text>
</comment>
<comment type="catalytic activity">
    <reaction evidence="1">
        <text>di-trans,octa-cis-undecaprenyl diphosphate + H2O = di-trans,octa-cis-undecaprenyl phosphate + phosphate + H(+)</text>
        <dbReference type="Rhea" id="RHEA:28094"/>
        <dbReference type="ChEBI" id="CHEBI:15377"/>
        <dbReference type="ChEBI" id="CHEBI:15378"/>
        <dbReference type="ChEBI" id="CHEBI:43474"/>
        <dbReference type="ChEBI" id="CHEBI:58405"/>
        <dbReference type="ChEBI" id="CHEBI:60392"/>
        <dbReference type="EC" id="3.6.1.27"/>
    </reaction>
</comment>
<comment type="subcellular location">
    <subcellularLocation>
        <location evidence="1">Cell membrane</location>
        <topology evidence="1">Multi-pass membrane protein</topology>
    </subcellularLocation>
</comment>
<comment type="similarity">
    <text evidence="1">Belongs to the UppP family.</text>
</comment>
<name>UPPP_METM6</name>
<gene>
    <name evidence="1" type="primary">uppP</name>
    <name type="ordered locus">MmarC6_1525</name>
</gene>
<accession>A9AAG5</accession>
<feature type="chain" id="PRO_1000197425" description="Undecaprenyl-diphosphatase">
    <location>
        <begin position="1"/>
        <end position="249"/>
    </location>
</feature>
<feature type="transmembrane region" description="Helical" evidence="1">
    <location>
        <begin position="11"/>
        <end position="31"/>
    </location>
</feature>
<feature type="transmembrane region" description="Helical" evidence="1">
    <location>
        <begin position="35"/>
        <end position="55"/>
    </location>
</feature>
<feature type="transmembrane region" description="Helical" evidence="1">
    <location>
        <begin position="80"/>
        <end position="100"/>
    </location>
</feature>
<feature type="transmembrane region" description="Helical" evidence="1">
    <location>
        <begin position="101"/>
        <end position="121"/>
    </location>
</feature>
<feature type="transmembrane region" description="Helical" evidence="1">
    <location>
        <begin position="135"/>
        <end position="155"/>
    </location>
</feature>
<feature type="transmembrane region" description="Helical" evidence="1">
    <location>
        <begin position="180"/>
        <end position="200"/>
    </location>
</feature>
<feature type="transmembrane region" description="Helical" evidence="1">
    <location>
        <begin position="202"/>
        <end position="222"/>
    </location>
</feature>
<feature type="transmembrane region" description="Helical" evidence="1">
    <location>
        <begin position="226"/>
        <end position="246"/>
    </location>
</feature>
<reference key="1">
    <citation type="submission" date="2007-10" db="EMBL/GenBank/DDBJ databases">
        <title>Complete sequence of Methanococcus maripaludis C6.</title>
        <authorList>
            <consortium name="US DOE Joint Genome Institute"/>
            <person name="Copeland A."/>
            <person name="Lucas S."/>
            <person name="Lapidus A."/>
            <person name="Barry K."/>
            <person name="Glavina del Rio T."/>
            <person name="Dalin E."/>
            <person name="Tice H."/>
            <person name="Pitluck S."/>
            <person name="Clum A."/>
            <person name="Schmutz J."/>
            <person name="Larimer F."/>
            <person name="Land M."/>
            <person name="Hauser L."/>
            <person name="Kyrpides N."/>
            <person name="Mikhailova N."/>
            <person name="Sieprawska-Lupa M."/>
            <person name="Whitman W.B."/>
            <person name="Richardson P."/>
        </authorList>
    </citation>
    <scope>NUCLEOTIDE SEQUENCE [LARGE SCALE GENOMIC DNA]</scope>
    <source>
        <strain>C6 / ATCC BAA-1332</strain>
    </source>
</reference>